<dbReference type="EMBL" id="D89269">
    <property type="protein sequence ID" value="BAA13930.1"/>
    <property type="status" value="ALT_FRAME"/>
    <property type="molecule type" value="mRNA"/>
</dbReference>
<dbReference type="EMBL" id="CU329671">
    <property type="protein sequence ID" value="CAA17069.1"/>
    <property type="molecule type" value="Genomic_DNA"/>
</dbReference>
<dbReference type="PIR" id="T39846">
    <property type="entry name" value="T39846"/>
</dbReference>
<dbReference type="PIR" id="T43197">
    <property type="entry name" value="T43197"/>
</dbReference>
<dbReference type="RefSeq" id="NP_595981.1">
    <property type="nucleotide sequence ID" value="NM_001021888.2"/>
</dbReference>
<dbReference type="SMR" id="O42963"/>
<dbReference type="BioGRID" id="277295">
    <property type="interactions" value="3"/>
</dbReference>
<dbReference type="FunCoup" id="O42963">
    <property type="interactions" value="87"/>
</dbReference>
<dbReference type="IntAct" id="O42963">
    <property type="interactions" value="1"/>
</dbReference>
<dbReference type="STRING" id="284812.O42963"/>
<dbReference type="iPTMnet" id="O42963"/>
<dbReference type="PaxDb" id="4896-SPBC19G7.15.1"/>
<dbReference type="EnsemblFungi" id="SPBC19G7.15.1">
    <property type="protein sequence ID" value="SPBC19G7.15.1:pep"/>
    <property type="gene ID" value="SPBC19G7.15"/>
</dbReference>
<dbReference type="GeneID" id="2540775"/>
<dbReference type="KEGG" id="spo:2540775"/>
<dbReference type="PomBase" id="SPBC19G7.15">
    <property type="gene designation" value="nup44"/>
</dbReference>
<dbReference type="VEuPathDB" id="FungiDB:SPBC19G7.15"/>
<dbReference type="eggNOG" id="KOG3091">
    <property type="taxonomic scope" value="Eukaryota"/>
</dbReference>
<dbReference type="HOGENOM" id="CLU_023804_0_1_1"/>
<dbReference type="InParanoid" id="O42963"/>
<dbReference type="OMA" id="ANARTCA"/>
<dbReference type="PhylomeDB" id="O42963"/>
<dbReference type="Reactome" id="R-SPO-159227">
    <property type="pathway name" value="Transport of the SLBP independent Mature mRNA"/>
</dbReference>
<dbReference type="Reactome" id="R-SPO-159231">
    <property type="pathway name" value="Transport of Mature mRNA Derived from an Intronless Transcript"/>
</dbReference>
<dbReference type="Reactome" id="R-SPO-159236">
    <property type="pathway name" value="Transport of Mature mRNA derived from an Intron-Containing Transcript"/>
</dbReference>
<dbReference type="Reactome" id="R-SPO-3371453">
    <property type="pathway name" value="Regulation of HSF1-mediated heat shock response"/>
</dbReference>
<dbReference type="Reactome" id="R-SPO-4085377">
    <property type="pathway name" value="SUMOylation of SUMOylation proteins"/>
</dbReference>
<dbReference type="Reactome" id="R-SPO-4551638">
    <property type="pathway name" value="SUMOylation of chromatin organization proteins"/>
</dbReference>
<dbReference type="Reactome" id="R-SPO-4570464">
    <property type="pathway name" value="SUMOylation of RNA binding proteins"/>
</dbReference>
<dbReference type="Reactome" id="R-SPO-5578749">
    <property type="pathway name" value="Transcriptional regulation by small RNAs"/>
</dbReference>
<dbReference type="PRO" id="PR:O42963"/>
<dbReference type="Proteomes" id="UP000002485">
    <property type="component" value="Chromosome II"/>
</dbReference>
<dbReference type="GO" id="GO:0005829">
    <property type="term" value="C:cytosol"/>
    <property type="evidence" value="ECO:0007005"/>
    <property type="project" value="PomBase"/>
</dbReference>
<dbReference type="GO" id="GO:0005635">
    <property type="term" value="C:nuclear envelope"/>
    <property type="evidence" value="ECO:0007005"/>
    <property type="project" value="PomBase"/>
</dbReference>
<dbReference type="GO" id="GO:0034399">
    <property type="term" value="C:nuclear periphery"/>
    <property type="evidence" value="ECO:0000314"/>
    <property type="project" value="PomBase"/>
</dbReference>
<dbReference type="GO" id="GO:0005643">
    <property type="term" value="C:nuclear pore"/>
    <property type="evidence" value="ECO:0000314"/>
    <property type="project" value="PomBase"/>
</dbReference>
<dbReference type="GO" id="GO:0044613">
    <property type="term" value="C:nuclear pore central transport channel"/>
    <property type="evidence" value="ECO:0000318"/>
    <property type="project" value="GO_Central"/>
</dbReference>
<dbReference type="GO" id="GO:0005634">
    <property type="term" value="C:nucleus"/>
    <property type="evidence" value="ECO:0007005"/>
    <property type="project" value="PomBase"/>
</dbReference>
<dbReference type="GO" id="GO:0017056">
    <property type="term" value="F:structural constituent of nuclear pore"/>
    <property type="evidence" value="ECO:0000318"/>
    <property type="project" value="GO_Central"/>
</dbReference>
<dbReference type="GO" id="GO:0006607">
    <property type="term" value="P:NLS-bearing protein import into nucleus"/>
    <property type="evidence" value="ECO:0000318"/>
    <property type="project" value="GO_Central"/>
</dbReference>
<dbReference type="GO" id="GO:0006999">
    <property type="term" value="P:nuclear pore organization"/>
    <property type="evidence" value="ECO:0000318"/>
    <property type="project" value="GO_Central"/>
</dbReference>
<dbReference type="GO" id="GO:0036228">
    <property type="term" value="P:protein localization to nuclear inner membrane"/>
    <property type="evidence" value="ECO:0000318"/>
    <property type="project" value="GO_Central"/>
</dbReference>
<dbReference type="GO" id="GO:0000054">
    <property type="term" value="P:ribosomal subunit export from nucleus"/>
    <property type="evidence" value="ECO:0000266"/>
    <property type="project" value="PomBase"/>
</dbReference>
<dbReference type="Gene3D" id="1.20.5.490">
    <property type="entry name" value="Single helix bin"/>
    <property type="match status" value="1"/>
</dbReference>
<dbReference type="InterPro" id="IPR024864">
    <property type="entry name" value="Nup54/Nup57/Nup44"/>
</dbReference>
<dbReference type="InterPro" id="IPR025712">
    <property type="entry name" value="Nup54_alpha-helical_dom"/>
</dbReference>
<dbReference type="PANTHER" id="PTHR13000">
    <property type="entry name" value="NUCLEOPORIN P54"/>
    <property type="match status" value="1"/>
</dbReference>
<dbReference type="PANTHER" id="PTHR13000:SF0">
    <property type="entry name" value="NUCLEOPORIN P54"/>
    <property type="match status" value="1"/>
</dbReference>
<dbReference type="Pfam" id="PF13874">
    <property type="entry name" value="Nup54"/>
    <property type="match status" value="1"/>
</dbReference>
<sequence>MAFSFGQQGSSIKAPSIGSTGVFGQSNTTKPTAPFGSGSIFGSTNTNVGAGGPTGSSSAPPFGNSIFGKTQQQPTTSFSNTTTNAPQSTVFGQNAASRTGNSNTQPLFSWSTVNNPTKPVDETNATIPSSLLLSSGISPNATVSNAQYGPAQPPSVEEQVQKILNAWNLNHPDCAFQRFFYNKVPVEQAALYVKPPNYNQQKWDEAVANRPSNSVVPVLAVGFPDVQKRINMQIQQVNTYRIRMREIVETLGRLSNKHDLDFSIKLAEAKNRHVRLSERILRLAIKVHVLRHRGYALKPNEEELRKKLDDLTKSLNNPEIFGRLNEIWARITLIFEGEKISEDQRSNLAKGVVDWRKNSDQLEVITDVLRDHQVGLSYVVKLMQEDLATLNKQLTEHVPQSQK</sequence>
<organism>
    <name type="scientific">Schizosaccharomyces pombe (strain 972 / ATCC 24843)</name>
    <name type="common">Fission yeast</name>
    <dbReference type="NCBI Taxonomy" id="284812"/>
    <lineage>
        <taxon>Eukaryota</taxon>
        <taxon>Fungi</taxon>
        <taxon>Dikarya</taxon>
        <taxon>Ascomycota</taxon>
        <taxon>Taphrinomycotina</taxon>
        <taxon>Schizosaccharomycetes</taxon>
        <taxon>Schizosaccharomycetales</taxon>
        <taxon>Schizosaccharomycetaceae</taxon>
        <taxon>Schizosaccharomyces</taxon>
    </lineage>
</organism>
<protein>
    <recommendedName>
        <fullName>Nucleoporin nup44</fullName>
    </recommendedName>
    <alternativeName>
        <fullName>Nuclear pore protein nup44</fullName>
    </alternativeName>
</protein>
<feature type="chain" id="PRO_0000290671" description="Nucleoporin nup44">
    <location>
        <begin position="1"/>
        <end position="403"/>
    </location>
</feature>
<feature type="region of interest" description="Disordered" evidence="1">
    <location>
        <begin position="1"/>
        <end position="124"/>
    </location>
</feature>
<feature type="compositionally biased region" description="Polar residues" evidence="1">
    <location>
        <begin position="1"/>
        <end position="31"/>
    </location>
</feature>
<feature type="compositionally biased region" description="Polar residues" evidence="1">
    <location>
        <begin position="67"/>
        <end position="124"/>
    </location>
</feature>
<feature type="sequence conflict" description="In Ref. 1; BAA13930." evidence="3" ref="1">
    <original>F</original>
    <variation>L</variation>
    <location>
        <position position="41"/>
    </location>
</feature>
<feature type="sequence conflict" description="In Ref. 1; BAA13930." evidence="3" ref="1">
    <original>T</original>
    <variation>P</variation>
    <location>
        <position position="75"/>
    </location>
</feature>
<feature type="sequence conflict" description="In Ref. 1; BAA13930." evidence="3" ref="1">
    <original>I</original>
    <variation>F</variation>
    <location>
        <position position="242"/>
    </location>
</feature>
<comment type="function">
    <text evidence="2">Functions as a component of the nuclear pore complex (NPC). NPC components, collectively referred to as nucleoporins (NUPs), can play the role of both NPC structural components and of docking or interaction partners for transiently associated nuclear transport factors. Active directional transport is assured by both, a Phe-Gly (FG) repeat affinity gradient for these transport factors across the NPC and a transport cofactor concentration gradient across the nuclear envelope.</text>
</comment>
<comment type="subcellular location">
    <subcellularLocation>
        <location>Cytoplasm</location>
    </subcellularLocation>
    <subcellularLocation>
        <location>Nucleus</location>
    </subcellularLocation>
</comment>
<comment type="sequence caution" evidence="3">
    <conflict type="frameshift">
        <sequence resource="EMBL-CDS" id="BAA13930"/>
    </conflict>
</comment>
<gene>
    <name type="primary">nup44</name>
    <name type="ORF">SPBC19G7.15</name>
</gene>
<keyword id="KW-0963">Cytoplasm</keyword>
<keyword id="KW-0539">Nucleus</keyword>
<keyword id="KW-1185">Reference proteome</keyword>
<keyword id="KW-0813">Transport</keyword>
<reference key="1">
    <citation type="journal article" date="1997" name="DNA Res.">
        <title>Identification of open reading frames in Schizosaccharomyces pombe cDNAs.</title>
        <authorList>
            <person name="Yoshioka S."/>
            <person name="Kato K."/>
            <person name="Nakai K."/>
            <person name="Okayama H."/>
            <person name="Nojima H."/>
        </authorList>
    </citation>
    <scope>NUCLEOTIDE SEQUENCE [LARGE SCALE MRNA]</scope>
    <source>
        <strain>PR745</strain>
    </source>
</reference>
<reference key="2">
    <citation type="journal article" date="2002" name="Nature">
        <title>The genome sequence of Schizosaccharomyces pombe.</title>
        <authorList>
            <person name="Wood V."/>
            <person name="Gwilliam R."/>
            <person name="Rajandream M.A."/>
            <person name="Lyne M.H."/>
            <person name="Lyne R."/>
            <person name="Stewart A."/>
            <person name="Sgouros J.G."/>
            <person name="Peat N."/>
            <person name="Hayles J."/>
            <person name="Baker S.G."/>
            <person name="Basham D."/>
            <person name="Bowman S."/>
            <person name="Brooks K."/>
            <person name="Brown D."/>
            <person name="Brown S."/>
            <person name="Chillingworth T."/>
            <person name="Churcher C.M."/>
            <person name="Collins M."/>
            <person name="Connor R."/>
            <person name="Cronin A."/>
            <person name="Davis P."/>
            <person name="Feltwell T."/>
            <person name="Fraser A."/>
            <person name="Gentles S."/>
            <person name="Goble A."/>
            <person name="Hamlin N."/>
            <person name="Harris D.E."/>
            <person name="Hidalgo J."/>
            <person name="Hodgson G."/>
            <person name="Holroyd S."/>
            <person name="Hornsby T."/>
            <person name="Howarth S."/>
            <person name="Huckle E.J."/>
            <person name="Hunt S."/>
            <person name="Jagels K."/>
            <person name="James K.D."/>
            <person name="Jones L."/>
            <person name="Jones M."/>
            <person name="Leather S."/>
            <person name="McDonald S."/>
            <person name="McLean J."/>
            <person name="Mooney P."/>
            <person name="Moule S."/>
            <person name="Mungall K.L."/>
            <person name="Murphy L.D."/>
            <person name="Niblett D."/>
            <person name="Odell C."/>
            <person name="Oliver K."/>
            <person name="O'Neil S."/>
            <person name="Pearson D."/>
            <person name="Quail M.A."/>
            <person name="Rabbinowitsch E."/>
            <person name="Rutherford K.M."/>
            <person name="Rutter S."/>
            <person name="Saunders D."/>
            <person name="Seeger K."/>
            <person name="Sharp S."/>
            <person name="Skelton J."/>
            <person name="Simmonds M.N."/>
            <person name="Squares R."/>
            <person name="Squares S."/>
            <person name="Stevens K."/>
            <person name="Taylor K."/>
            <person name="Taylor R.G."/>
            <person name="Tivey A."/>
            <person name="Walsh S.V."/>
            <person name="Warren T."/>
            <person name="Whitehead S."/>
            <person name="Woodward J.R."/>
            <person name="Volckaert G."/>
            <person name="Aert R."/>
            <person name="Robben J."/>
            <person name="Grymonprez B."/>
            <person name="Weltjens I."/>
            <person name="Vanstreels E."/>
            <person name="Rieger M."/>
            <person name="Schaefer M."/>
            <person name="Mueller-Auer S."/>
            <person name="Gabel C."/>
            <person name="Fuchs M."/>
            <person name="Duesterhoeft A."/>
            <person name="Fritzc C."/>
            <person name="Holzer E."/>
            <person name="Moestl D."/>
            <person name="Hilbert H."/>
            <person name="Borzym K."/>
            <person name="Langer I."/>
            <person name="Beck A."/>
            <person name="Lehrach H."/>
            <person name="Reinhardt R."/>
            <person name="Pohl T.M."/>
            <person name="Eger P."/>
            <person name="Zimmermann W."/>
            <person name="Wedler H."/>
            <person name="Wambutt R."/>
            <person name="Purnelle B."/>
            <person name="Goffeau A."/>
            <person name="Cadieu E."/>
            <person name="Dreano S."/>
            <person name="Gloux S."/>
            <person name="Lelaure V."/>
            <person name="Mottier S."/>
            <person name="Galibert F."/>
            <person name="Aves S.J."/>
            <person name="Xiang Z."/>
            <person name="Hunt C."/>
            <person name="Moore K."/>
            <person name="Hurst S.M."/>
            <person name="Lucas M."/>
            <person name="Rochet M."/>
            <person name="Gaillardin C."/>
            <person name="Tallada V.A."/>
            <person name="Garzon A."/>
            <person name="Thode G."/>
            <person name="Daga R.R."/>
            <person name="Cruzado L."/>
            <person name="Jimenez J."/>
            <person name="Sanchez M."/>
            <person name="del Rey F."/>
            <person name="Benito J."/>
            <person name="Dominguez A."/>
            <person name="Revuelta J.L."/>
            <person name="Moreno S."/>
            <person name="Armstrong J."/>
            <person name="Forsburg S.L."/>
            <person name="Cerutti L."/>
            <person name="Lowe T."/>
            <person name="McCombie W.R."/>
            <person name="Paulsen I."/>
            <person name="Potashkin J."/>
            <person name="Shpakovski G.V."/>
            <person name="Ussery D."/>
            <person name="Barrell B.G."/>
            <person name="Nurse P."/>
        </authorList>
    </citation>
    <scope>NUCLEOTIDE SEQUENCE [LARGE SCALE GENOMIC DNA]</scope>
    <source>
        <strain>972 / ATCC 24843</strain>
    </source>
</reference>
<reference key="3">
    <citation type="journal article" date="2004" name="Yeast">
        <title>Identification of genes encoding putative nucleoporins and transport factors in the fission yeast Schizosaccharomyces pombe: a deletion analysis.</title>
        <authorList>
            <person name="Chen X.Q."/>
            <person name="Du X."/>
            <person name="Liu J."/>
            <person name="Balasubramanian M.K."/>
            <person name="Balasundaram D."/>
        </authorList>
    </citation>
    <scope>FUNCTION</scope>
    <scope>SUBCELLULAR LOCATION</scope>
</reference>
<reference key="4">
    <citation type="journal article" date="2006" name="Nat. Biotechnol.">
        <title>ORFeome cloning and global analysis of protein localization in the fission yeast Schizosaccharomyces pombe.</title>
        <authorList>
            <person name="Matsuyama A."/>
            <person name="Arai R."/>
            <person name="Yashiroda Y."/>
            <person name="Shirai A."/>
            <person name="Kamata A."/>
            <person name="Sekido S."/>
            <person name="Kobayashi Y."/>
            <person name="Hashimoto A."/>
            <person name="Hamamoto M."/>
            <person name="Hiraoka Y."/>
            <person name="Horinouchi S."/>
            <person name="Yoshida M."/>
        </authorList>
    </citation>
    <scope>SUBCELLULAR LOCATION [LARGE SCALE ANALYSIS]</scope>
</reference>
<accession>O42963</accession>
<accession>P78918</accession>
<accession>Q1L840</accession>
<name>NUP44_SCHPO</name>
<evidence type="ECO:0000256" key="1">
    <source>
        <dbReference type="SAM" id="MobiDB-lite"/>
    </source>
</evidence>
<evidence type="ECO:0000269" key="2">
    <source>
    </source>
</evidence>
<evidence type="ECO:0000305" key="3"/>
<proteinExistence type="evidence at transcript level"/>